<proteinExistence type="inferred from homology"/>
<sequence length="492" mass="55161">MDAMKYHDLRDFLTLLEQQGELKRITLPVDPHLEITEIADRTLRAGGPALLFENPKGYAMPVLCNLFGTPKRVAMGMGQDDVSALREVGKLLAFLKEPEPPKGFRDLFDKLPQFKQVLNMPTKRLRGAPCQQKIASGDDVDLTRLPVMTCWPDDAAPLITWGLTVTRGPHKERQNLGIYRQQLIGKNKLIMRWLSHRGGALDFQEWLAARPGERFPVSVALGADPATILGAVTPVPDTLSEYAFAGLLRGTKTEVVKCLSNDLEVPASAEIILEGYIEPGEMAPEGPYGDHTGYYNEVDNFPVFTVTHITQREDAIYHSTYTGRPPDEPAVLGVALNEVFVPILQKQFPEIVDFYLPPEGCSYRLAVVTMKKQYAGHAKRVMMGVWSFLRQFMYTKFVIVCDDDVNARDWNDVIWAITTRMDPARDTVLVENTPIDYLDFASPVSGLGSKMGLDATNKWPGETQREWGRPIVKDPEVTARIDAIWDELAIFK</sequence>
<reference key="1">
    <citation type="journal article" date="2001" name="Nature">
        <title>Complete genome sequence of a multiple drug resistant Salmonella enterica serovar Typhi CT18.</title>
        <authorList>
            <person name="Parkhill J."/>
            <person name="Dougan G."/>
            <person name="James K.D."/>
            <person name="Thomson N.R."/>
            <person name="Pickard D."/>
            <person name="Wain J."/>
            <person name="Churcher C.M."/>
            <person name="Mungall K.L."/>
            <person name="Bentley S.D."/>
            <person name="Holden M.T.G."/>
            <person name="Sebaihia M."/>
            <person name="Baker S."/>
            <person name="Basham D."/>
            <person name="Brooks K."/>
            <person name="Chillingworth T."/>
            <person name="Connerton P."/>
            <person name="Cronin A."/>
            <person name="Davis P."/>
            <person name="Davies R.M."/>
            <person name="Dowd L."/>
            <person name="White N."/>
            <person name="Farrar J."/>
            <person name="Feltwell T."/>
            <person name="Hamlin N."/>
            <person name="Haque A."/>
            <person name="Hien T.T."/>
            <person name="Holroyd S."/>
            <person name="Jagels K."/>
            <person name="Krogh A."/>
            <person name="Larsen T.S."/>
            <person name="Leather S."/>
            <person name="Moule S."/>
            <person name="O'Gaora P."/>
            <person name="Parry C."/>
            <person name="Quail M.A."/>
            <person name="Rutherford K.M."/>
            <person name="Simmonds M."/>
            <person name="Skelton J."/>
            <person name="Stevens K."/>
            <person name="Whitehead S."/>
            <person name="Barrell B.G."/>
        </authorList>
    </citation>
    <scope>NUCLEOTIDE SEQUENCE [LARGE SCALE GENOMIC DNA]</scope>
    <source>
        <strain>CT18</strain>
    </source>
</reference>
<reference key="2">
    <citation type="journal article" date="2003" name="J. Bacteriol.">
        <title>Comparative genomics of Salmonella enterica serovar Typhi strains Ty2 and CT18.</title>
        <authorList>
            <person name="Deng W."/>
            <person name="Liou S.-R."/>
            <person name="Plunkett G. III"/>
            <person name="Mayhew G.F."/>
            <person name="Rose D.J."/>
            <person name="Burland V."/>
            <person name="Kodoyianni V."/>
            <person name="Schwartz D.C."/>
            <person name="Blattner F.R."/>
        </authorList>
    </citation>
    <scope>NUCLEOTIDE SEQUENCE [LARGE SCALE GENOMIC DNA]</scope>
    <source>
        <strain>ATCC 700931 / Ty2</strain>
    </source>
</reference>
<organism>
    <name type="scientific">Salmonella typhi</name>
    <dbReference type="NCBI Taxonomy" id="90370"/>
    <lineage>
        <taxon>Bacteria</taxon>
        <taxon>Pseudomonadati</taxon>
        <taxon>Pseudomonadota</taxon>
        <taxon>Gammaproteobacteria</taxon>
        <taxon>Enterobacterales</taxon>
        <taxon>Enterobacteriaceae</taxon>
        <taxon>Salmonella</taxon>
    </lineage>
</organism>
<evidence type="ECO:0000255" key="1">
    <source>
        <dbReference type="HAMAP-Rule" id="MF_01636"/>
    </source>
</evidence>
<evidence type="ECO:0000305" key="2"/>
<keyword id="KW-1003">Cell membrane</keyword>
<keyword id="KW-0210">Decarboxylase</keyword>
<keyword id="KW-0285">Flavoprotein</keyword>
<keyword id="KW-0288">FMN</keyword>
<keyword id="KW-0456">Lyase</keyword>
<keyword id="KW-0464">Manganese</keyword>
<keyword id="KW-0472">Membrane</keyword>
<keyword id="KW-0479">Metal-binding</keyword>
<keyword id="KW-0831">Ubiquinone biosynthesis</keyword>
<protein>
    <recommendedName>
        <fullName evidence="1">3-octaprenyl-4-hydroxybenzoate carboxy-lyase</fullName>
        <ecNumber evidence="1">4.1.1.98</ecNumber>
    </recommendedName>
    <alternativeName>
        <fullName evidence="1">Polyprenyl p-hydroxybenzoate decarboxylase</fullName>
    </alternativeName>
</protein>
<accession>Q8Z3C3</accession>
<accession>Q83SV6</accession>
<feature type="chain" id="PRO_0000267693" description="3-octaprenyl-4-hydroxybenzoate carboxy-lyase">
    <location>
        <begin position="1"/>
        <end position="492"/>
    </location>
</feature>
<feature type="active site" description="Proton donor" evidence="1">
    <location>
        <position position="290"/>
    </location>
</feature>
<feature type="binding site" evidence="1">
    <location>
        <position position="175"/>
    </location>
    <ligand>
        <name>Mn(2+)</name>
        <dbReference type="ChEBI" id="CHEBI:29035"/>
    </ligand>
</feature>
<feature type="binding site" evidence="1">
    <location>
        <begin position="178"/>
        <end position="180"/>
    </location>
    <ligand>
        <name>prenylated FMN</name>
        <dbReference type="ChEBI" id="CHEBI:87746"/>
    </ligand>
</feature>
<feature type="binding site" evidence="1">
    <location>
        <begin position="192"/>
        <end position="194"/>
    </location>
    <ligand>
        <name>prenylated FMN</name>
        <dbReference type="ChEBI" id="CHEBI:87746"/>
    </ligand>
</feature>
<feature type="binding site" evidence="1">
    <location>
        <begin position="197"/>
        <end position="198"/>
    </location>
    <ligand>
        <name>prenylated FMN</name>
        <dbReference type="ChEBI" id="CHEBI:87746"/>
    </ligand>
</feature>
<feature type="binding site" evidence="1">
    <location>
        <position position="241"/>
    </location>
    <ligand>
        <name>Mn(2+)</name>
        <dbReference type="ChEBI" id="CHEBI:29035"/>
    </ligand>
</feature>
<feature type="sequence conflict" description="In Ref. 2; AAO70847." evidence="2" ref="2">
    <original>G</original>
    <variation>S</variation>
    <location>
        <position position="384"/>
    </location>
</feature>
<gene>
    <name evidence="1" type="primary">ubiD</name>
    <name type="ordered locus">STY3581</name>
    <name type="ordered locus">t3319</name>
</gene>
<dbReference type="EC" id="4.1.1.98" evidence="1"/>
<dbReference type="EMBL" id="AL513382">
    <property type="protein sequence ID" value="CAD07914.1"/>
    <property type="molecule type" value="Genomic_DNA"/>
</dbReference>
<dbReference type="EMBL" id="AE014613">
    <property type="protein sequence ID" value="AAO70847.1"/>
    <property type="molecule type" value="Genomic_DNA"/>
</dbReference>
<dbReference type="RefSeq" id="NP_457773.1">
    <property type="nucleotide sequence ID" value="NC_003198.1"/>
</dbReference>
<dbReference type="RefSeq" id="WP_000339760.1">
    <property type="nucleotide sequence ID" value="NZ_QXGZ01000007.1"/>
</dbReference>
<dbReference type="SMR" id="Q8Z3C3"/>
<dbReference type="STRING" id="220341.gene:17587433"/>
<dbReference type="KEGG" id="stt:t3319"/>
<dbReference type="KEGG" id="sty:STY3581"/>
<dbReference type="PATRIC" id="fig|220341.7.peg.3648"/>
<dbReference type="eggNOG" id="COG0043">
    <property type="taxonomic scope" value="Bacteria"/>
</dbReference>
<dbReference type="HOGENOM" id="CLU_023348_4_1_6"/>
<dbReference type="OMA" id="DWKDVIW"/>
<dbReference type="OrthoDB" id="9809841at2"/>
<dbReference type="UniPathway" id="UPA00232"/>
<dbReference type="Proteomes" id="UP000000541">
    <property type="component" value="Chromosome"/>
</dbReference>
<dbReference type="Proteomes" id="UP000002670">
    <property type="component" value="Chromosome"/>
</dbReference>
<dbReference type="GO" id="GO:0005829">
    <property type="term" value="C:cytosol"/>
    <property type="evidence" value="ECO:0007669"/>
    <property type="project" value="TreeGrafter"/>
</dbReference>
<dbReference type="GO" id="GO:0005886">
    <property type="term" value="C:plasma membrane"/>
    <property type="evidence" value="ECO:0007669"/>
    <property type="project" value="UniProtKB-SubCell"/>
</dbReference>
<dbReference type="GO" id="GO:0008694">
    <property type="term" value="F:3-octaprenyl-4-hydroxybenzoate carboxy-lyase activity"/>
    <property type="evidence" value="ECO:0007669"/>
    <property type="project" value="UniProtKB-UniRule"/>
</dbReference>
<dbReference type="GO" id="GO:0046872">
    <property type="term" value="F:metal ion binding"/>
    <property type="evidence" value="ECO:0007669"/>
    <property type="project" value="UniProtKB-KW"/>
</dbReference>
<dbReference type="GO" id="GO:0006744">
    <property type="term" value="P:ubiquinone biosynthetic process"/>
    <property type="evidence" value="ECO:0007669"/>
    <property type="project" value="UniProtKB-UniRule"/>
</dbReference>
<dbReference type="FunFam" id="1.20.5.570:FF:000001">
    <property type="entry name" value="3-octaprenyl-4-hydroxybenzoate carboxy-lyase"/>
    <property type="match status" value="1"/>
</dbReference>
<dbReference type="FunFam" id="3.40.1670.10:FF:000001">
    <property type="entry name" value="3-octaprenyl-4-hydroxybenzoate carboxy-lyase"/>
    <property type="match status" value="1"/>
</dbReference>
<dbReference type="Gene3D" id="1.20.5.570">
    <property type="entry name" value="Single helix bin"/>
    <property type="match status" value="1"/>
</dbReference>
<dbReference type="Gene3D" id="3.40.1670.10">
    <property type="entry name" value="UbiD C-terminal domain-like"/>
    <property type="match status" value="1"/>
</dbReference>
<dbReference type="HAMAP" id="MF_01636">
    <property type="entry name" value="UbiD"/>
    <property type="match status" value="1"/>
</dbReference>
<dbReference type="InterPro" id="IPR002830">
    <property type="entry name" value="UbiD"/>
</dbReference>
<dbReference type="InterPro" id="IPR049381">
    <property type="entry name" value="UbiD-like_C"/>
</dbReference>
<dbReference type="InterPro" id="IPR049383">
    <property type="entry name" value="UbiD-like_N"/>
</dbReference>
<dbReference type="InterPro" id="IPR023677">
    <property type="entry name" value="UbiD_bacteria"/>
</dbReference>
<dbReference type="InterPro" id="IPR048304">
    <property type="entry name" value="UbiD_Rift_dom"/>
</dbReference>
<dbReference type="NCBIfam" id="NF008175">
    <property type="entry name" value="PRK10922.1"/>
    <property type="match status" value="1"/>
</dbReference>
<dbReference type="NCBIfam" id="TIGR00148">
    <property type="entry name" value="UbiD family decarboxylase"/>
    <property type="match status" value="1"/>
</dbReference>
<dbReference type="PANTHER" id="PTHR30108">
    <property type="entry name" value="3-OCTAPRENYL-4-HYDROXYBENZOATE CARBOXY-LYASE-RELATED"/>
    <property type="match status" value="1"/>
</dbReference>
<dbReference type="PANTHER" id="PTHR30108:SF17">
    <property type="entry name" value="FERULIC ACID DECARBOXYLASE 1"/>
    <property type="match status" value="1"/>
</dbReference>
<dbReference type="Pfam" id="PF01977">
    <property type="entry name" value="UbiD"/>
    <property type="match status" value="1"/>
</dbReference>
<dbReference type="Pfam" id="PF20696">
    <property type="entry name" value="UbiD_C"/>
    <property type="match status" value="1"/>
</dbReference>
<dbReference type="Pfam" id="PF20695">
    <property type="entry name" value="UbiD_N"/>
    <property type="match status" value="1"/>
</dbReference>
<dbReference type="SUPFAM" id="SSF50475">
    <property type="entry name" value="FMN-binding split barrel"/>
    <property type="match status" value="1"/>
</dbReference>
<dbReference type="SUPFAM" id="SSF143968">
    <property type="entry name" value="UbiD C-terminal domain-like"/>
    <property type="match status" value="1"/>
</dbReference>
<name>UBID_SALTI</name>
<comment type="function">
    <text evidence="1">Catalyzes the decarboxylation of 3-octaprenyl-4-hydroxy benzoate to 2-octaprenylphenol, an intermediate step in ubiquinone biosynthesis.</text>
</comment>
<comment type="catalytic activity">
    <reaction evidence="1">
        <text>a 4-hydroxy-3-(all-trans-polyprenyl)benzoate + H(+) = a 2-(all-trans-polyprenyl)phenol + CO2</text>
        <dbReference type="Rhea" id="RHEA:41680"/>
        <dbReference type="Rhea" id="RHEA-COMP:9514"/>
        <dbReference type="Rhea" id="RHEA-COMP:9516"/>
        <dbReference type="ChEBI" id="CHEBI:1269"/>
        <dbReference type="ChEBI" id="CHEBI:15378"/>
        <dbReference type="ChEBI" id="CHEBI:16526"/>
        <dbReference type="ChEBI" id="CHEBI:78396"/>
        <dbReference type="EC" id="4.1.1.98"/>
    </reaction>
</comment>
<comment type="cofactor">
    <cofactor evidence="1">
        <name>prenylated FMN</name>
        <dbReference type="ChEBI" id="CHEBI:87746"/>
    </cofactor>
    <text evidence="1">Binds 1 prenylated FMN per subunit.</text>
</comment>
<comment type="cofactor">
    <cofactor evidence="1">
        <name>Mn(2+)</name>
        <dbReference type="ChEBI" id="CHEBI:29035"/>
    </cofactor>
</comment>
<comment type="pathway">
    <text evidence="1">Cofactor biosynthesis; ubiquinone biosynthesis.</text>
</comment>
<comment type="subunit">
    <text evidence="1">Homohexamer.</text>
</comment>
<comment type="subcellular location">
    <subcellularLocation>
        <location evidence="1">Cell membrane</location>
        <topology evidence="1">Peripheral membrane protein</topology>
    </subcellularLocation>
</comment>
<comment type="similarity">
    <text evidence="1">Belongs to the UbiD family.</text>
</comment>